<reference key="1">
    <citation type="journal article" date="2000" name="Nature">
        <title>Complete genome sequence of Pseudomonas aeruginosa PAO1, an opportunistic pathogen.</title>
        <authorList>
            <person name="Stover C.K."/>
            <person name="Pham X.-Q.T."/>
            <person name="Erwin A.L."/>
            <person name="Mizoguchi S.D."/>
            <person name="Warrener P."/>
            <person name="Hickey M.J."/>
            <person name="Brinkman F.S.L."/>
            <person name="Hufnagle W.O."/>
            <person name="Kowalik D.J."/>
            <person name="Lagrou M."/>
            <person name="Garber R.L."/>
            <person name="Goltry L."/>
            <person name="Tolentino E."/>
            <person name="Westbrock-Wadman S."/>
            <person name="Yuan Y."/>
            <person name="Brody L.L."/>
            <person name="Coulter S.N."/>
            <person name="Folger K.R."/>
            <person name="Kas A."/>
            <person name="Larbig K."/>
            <person name="Lim R.M."/>
            <person name="Smith K.A."/>
            <person name="Spencer D.H."/>
            <person name="Wong G.K.-S."/>
            <person name="Wu Z."/>
            <person name="Paulsen I.T."/>
            <person name="Reizer J."/>
            <person name="Saier M.H. Jr."/>
            <person name="Hancock R.E.W."/>
            <person name="Lory S."/>
            <person name="Olson M.V."/>
        </authorList>
    </citation>
    <scope>NUCLEOTIDE SEQUENCE [LARGE SCALE GENOMIC DNA]</scope>
    <source>
        <strain>ATCC 15692 / DSM 22644 / CIP 104116 / JCM 14847 / LMG 12228 / 1C / PRS 101 / PAO1</strain>
    </source>
</reference>
<reference key="2">
    <citation type="journal article" date="2019" name="Int. J. Mol. Sci.">
        <title>Determination of Ligand Profiles for Pseudomonas aeruginosa Solute Binding Proteins.</title>
        <authorList>
            <person name="Fernandez M."/>
            <person name="Rico-Jimenez M."/>
            <person name="Ortega A."/>
            <person name="Daddaoua A."/>
            <person name="Garcia Garcia A.I."/>
            <person name="Martin-Mora D."/>
            <person name="Torres N.M."/>
            <person name="Tajuelo A."/>
            <person name="Matilla M.A."/>
            <person name="Krell T."/>
        </authorList>
    </citation>
    <scope>FUNCTION AS A BINDING PROTEIN</scope>
    <source>
        <strain>ATCC 15692 / DSM 22644 / CIP 104116 / JCM 14847 / LMG 12228 / 1C / PRS 101 / PAO1</strain>
    </source>
</reference>
<feature type="signal peptide" evidence="1">
    <location>
        <begin position="1"/>
        <end position="19"/>
    </location>
</feature>
<feature type="chain" id="PRO_5004328403" description="Putrescine/agmatine-binding protein" evidence="1">
    <location>
        <begin position="20"/>
        <end position="367"/>
    </location>
</feature>
<proteinExistence type="evidence at protein level"/>
<keyword id="KW-0574">Periplasm</keyword>
<keyword id="KW-1185">Reference proteome</keyword>
<keyword id="KW-0732">Signal</keyword>
<keyword id="KW-0813">Transport</keyword>
<comment type="function">
    <text evidence="2">Binds putrescine and agmatine.</text>
</comment>
<comment type="subcellular location">
    <subcellularLocation>
        <location evidence="3">Periplasm</location>
    </subcellularLocation>
</comment>
<comment type="similarity">
    <text evidence="3">Belongs to the bacterial solute-binding protein 1 family.</text>
</comment>
<dbReference type="EMBL" id="AE004091">
    <property type="protein sequence ID" value="AAG05980.1"/>
    <property type="molecule type" value="Genomic_DNA"/>
</dbReference>
<dbReference type="PIR" id="A83321">
    <property type="entry name" value="A83321"/>
</dbReference>
<dbReference type="RefSeq" id="NP_251282.1">
    <property type="nucleotide sequence ID" value="NC_002516.2"/>
</dbReference>
<dbReference type="RefSeq" id="WP_003090368.1">
    <property type="nucleotide sequence ID" value="NZ_QZGE01000008.1"/>
</dbReference>
<dbReference type="SMR" id="Q9I0P5"/>
<dbReference type="STRING" id="208964.PA2592"/>
<dbReference type="PaxDb" id="208964-PA2592"/>
<dbReference type="GeneID" id="878741"/>
<dbReference type="KEGG" id="pae:PA2592"/>
<dbReference type="PATRIC" id="fig|208964.12.peg.2713"/>
<dbReference type="PseudoCAP" id="PA2592"/>
<dbReference type="HOGENOM" id="CLU_026974_1_4_6"/>
<dbReference type="InParanoid" id="Q9I0P5"/>
<dbReference type="OrthoDB" id="9769319at2"/>
<dbReference type="PhylomeDB" id="Q9I0P5"/>
<dbReference type="BioCyc" id="PAER208964:G1FZ6-2631-MONOMER"/>
<dbReference type="Proteomes" id="UP000002438">
    <property type="component" value="Chromosome"/>
</dbReference>
<dbReference type="GO" id="GO:0005615">
    <property type="term" value="C:extracellular space"/>
    <property type="evidence" value="ECO:0000314"/>
    <property type="project" value="PseudoCAP"/>
</dbReference>
<dbReference type="GO" id="GO:0042597">
    <property type="term" value="C:periplasmic space"/>
    <property type="evidence" value="ECO:0007669"/>
    <property type="project" value="UniProtKB-SubCell"/>
</dbReference>
<dbReference type="GO" id="GO:0019808">
    <property type="term" value="F:polyamine binding"/>
    <property type="evidence" value="ECO:0007669"/>
    <property type="project" value="InterPro"/>
</dbReference>
<dbReference type="GO" id="GO:0015846">
    <property type="term" value="P:polyamine transport"/>
    <property type="evidence" value="ECO:0007669"/>
    <property type="project" value="InterPro"/>
</dbReference>
<dbReference type="CDD" id="cd13659">
    <property type="entry name" value="PBP2_PotF"/>
    <property type="match status" value="1"/>
</dbReference>
<dbReference type="Gene3D" id="3.40.190.10">
    <property type="entry name" value="Periplasmic binding protein-like II"/>
    <property type="match status" value="2"/>
</dbReference>
<dbReference type="InterPro" id="IPR006059">
    <property type="entry name" value="SBP"/>
</dbReference>
<dbReference type="InterPro" id="IPR001188">
    <property type="entry name" value="Sperm_putr-bd"/>
</dbReference>
<dbReference type="PANTHER" id="PTHR30222:SF12">
    <property type="entry name" value="NORSPERMIDINE SENSOR"/>
    <property type="match status" value="1"/>
</dbReference>
<dbReference type="PANTHER" id="PTHR30222">
    <property type="entry name" value="SPERMIDINE/PUTRESCINE-BINDING PERIPLASMIC PROTEIN"/>
    <property type="match status" value="1"/>
</dbReference>
<dbReference type="Pfam" id="PF13416">
    <property type="entry name" value="SBP_bac_8"/>
    <property type="match status" value="1"/>
</dbReference>
<dbReference type="PIRSF" id="PIRSF019574">
    <property type="entry name" value="Periplasmic_polyamine_BP"/>
    <property type="match status" value="1"/>
</dbReference>
<dbReference type="PRINTS" id="PR00909">
    <property type="entry name" value="SPERMDNBNDNG"/>
</dbReference>
<dbReference type="SUPFAM" id="SSF53850">
    <property type="entry name" value="Periplasmic binding protein-like II"/>
    <property type="match status" value="1"/>
</dbReference>
<name>PAGBP_PSEAE</name>
<sequence length="367" mass="40725">MKKVCALALSILTTIGATAADSAWAAQTSVHLYNWYDFIAPETPKAFQKETGTRVVLDTFDSAETAQGKLMVGRSGYDVVVITSNILPGLIKAGVLQELDRDRLPHWKNLDADILGKLQANDPGNRYAVPYLWGTTGIAYDVDKVRKLLGPDAPVDSWDLVFKEENISRLSQCGVATLDSSTELVSIALNYLGLPHNSQNPEDYQKAQELLLKVRPYIRYFDSSRVDTDLSNGNVCVVVGWQGTAYMAQVNNEQAGNGRHIAYSIPREGSLVWAENMVLLKDAPHPQQGYALIDYLLRPEVIARTSNYVGYPNGNQAALPLVERKLRENPAVYLSKETMATLFPLETLPLKVERIRTRVWSRVKTGS</sequence>
<accession>Q9I0P5</accession>
<protein>
    <recommendedName>
        <fullName evidence="3">Putrescine/agmatine-binding protein</fullName>
    </recommendedName>
</protein>
<evidence type="ECO:0000255" key="1"/>
<evidence type="ECO:0000269" key="2">
    <source>
    </source>
</evidence>
<evidence type="ECO:0000305" key="3"/>
<evidence type="ECO:0000312" key="4">
    <source>
        <dbReference type="EMBL" id="AAG05980.1"/>
    </source>
</evidence>
<organism>
    <name type="scientific">Pseudomonas aeruginosa (strain ATCC 15692 / DSM 22644 / CIP 104116 / JCM 14847 / LMG 12228 / 1C / PRS 101 / PAO1)</name>
    <dbReference type="NCBI Taxonomy" id="208964"/>
    <lineage>
        <taxon>Bacteria</taxon>
        <taxon>Pseudomonadati</taxon>
        <taxon>Pseudomonadota</taxon>
        <taxon>Gammaproteobacteria</taxon>
        <taxon>Pseudomonadales</taxon>
        <taxon>Pseudomonadaceae</taxon>
        <taxon>Pseudomonas</taxon>
    </lineage>
</organism>
<gene>
    <name evidence="4" type="ordered locus">PA2592</name>
</gene>